<accession>Q9AKP0</accession>
<reference key="1">
    <citation type="journal article" date="2001" name="Mol. Biol. Evol.">
        <title>Pseudogenes, junk DNA, and the dynamics of Rickettsia genomes.</title>
        <authorList>
            <person name="Andersson J.O."/>
            <person name="Andersson S.G.E."/>
        </authorList>
    </citation>
    <scope>NUCLEOTIDE SEQUENCE [GENOMIC DNA]</scope>
</reference>
<dbReference type="EC" id="6.3.2.13" evidence="1"/>
<dbReference type="EMBL" id="AJ293315">
    <property type="protein sequence ID" value="CAC33608.1"/>
    <property type="molecule type" value="Genomic_DNA"/>
</dbReference>
<dbReference type="SMR" id="Q9AKP0"/>
<dbReference type="OMA" id="EYFIMEV"/>
<dbReference type="UniPathway" id="UPA00219"/>
<dbReference type="GO" id="GO:0005737">
    <property type="term" value="C:cytoplasm"/>
    <property type="evidence" value="ECO:0007669"/>
    <property type="project" value="UniProtKB-SubCell"/>
</dbReference>
<dbReference type="GO" id="GO:0005524">
    <property type="term" value="F:ATP binding"/>
    <property type="evidence" value="ECO:0007669"/>
    <property type="project" value="UniProtKB-UniRule"/>
</dbReference>
<dbReference type="GO" id="GO:0000287">
    <property type="term" value="F:magnesium ion binding"/>
    <property type="evidence" value="ECO:0007669"/>
    <property type="project" value="UniProtKB-UniRule"/>
</dbReference>
<dbReference type="GO" id="GO:0008765">
    <property type="term" value="F:UDP-N-acetylmuramoylalanyl-D-glutamate-2,6-diaminopimelate ligase activity"/>
    <property type="evidence" value="ECO:0007669"/>
    <property type="project" value="UniProtKB-UniRule"/>
</dbReference>
<dbReference type="GO" id="GO:0051301">
    <property type="term" value="P:cell division"/>
    <property type="evidence" value="ECO:0007669"/>
    <property type="project" value="UniProtKB-KW"/>
</dbReference>
<dbReference type="GO" id="GO:0071555">
    <property type="term" value="P:cell wall organization"/>
    <property type="evidence" value="ECO:0007669"/>
    <property type="project" value="UniProtKB-KW"/>
</dbReference>
<dbReference type="GO" id="GO:0009252">
    <property type="term" value="P:peptidoglycan biosynthetic process"/>
    <property type="evidence" value="ECO:0007669"/>
    <property type="project" value="UniProtKB-UniRule"/>
</dbReference>
<dbReference type="GO" id="GO:0008360">
    <property type="term" value="P:regulation of cell shape"/>
    <property type="evidence" value="ECO:0007669"/>
    <property type="project" value="UniProtKB-KW"/>
</dbReference>
<dbReference type="Gene3D" id="3.90.190.20">
    <property type="entry name" value="Mur ligase, C-terminal domain"/>
    <property type="match status" value="1"/>
</dbReference>
<dbReference type="Gene3D" id="3.40.1190.10">
    <property type="entry name" value="Mur-like, catalytic domain"/>
    <property type="match status" value="1"/>
</dbReference>
<dbReference type="Gene3D" id="3.40.1390.10">
    <property type="entry name" value="MurE/MurF, N-terminal domain"/>
    <property type="match status" value="1"/>
</dbReference>
<dbReference type="HAMAP" id="MF_00208">
    <property type="entry name" value="MurE"/>
    <property type="match status" value="1"/>
</dbReference>
<dbReference type="InterPro" id="IPR036565">
    <property type="entry name" value="Mur-like_cat_sf"/>
</dbReference>
<dbReference type="InterPro" id="IPR004101">
    <property type="entry name" value="Mur_ligase_C"/>
</dbReference>
<dbReference type="InterPro" id="IPR036615">
    <property type="entry name" value="Mur_ligase_C_dom_sf"/>
</dbReference>
<dbReference type="InterPro" id="IPR013221">
    <property type="entry name" value="Mur_ligase_cen"/>
</dbReference>
<dbReference type="InterPro" id="IPR000713">
    <property type="entry name" value="Mur_ligase_N"/>
</dbReference>
<dbReference type="InterPro" id="IPR035911">
    <property type="entry name" value="MurE/MurF_N"/>
</dbReference>
<dbReference type="InterPro" id="IPR005761">
    <property type="entry name" value="UDP-N-AcMur-Glu-dNH2Pim_ligase"/>
</dbReference>
<dbReference type="NCBIfam" id="TIGR01085">
    <property type="entry name" value="murE"/>
    <property type="match status" value="1"/>
</dbReference>
<dbReference type="NCBIfam" id="NF001124">
    <property type="entry name" value="PRK00139.1-2"/>
    <property type="match status" value="1"/>
</dbReference>
<dbReference type="NCBIfam" id="NF001126">
    <property type="entry name" value="PRK00139.1-4"/>
    <property type="match status" value="1"/>
</dbReference>
<dbReference type="PANTHER" id="PTHR23135">
    <property type="entry name" value="MUR LIGASE FAMILY MEMBER"/>
    <property type="match status" value="1"/>
</dbReference>
<dbReference type="PANTHER" id="PTHR23135:SF4">
    <property type="entry name" value="UDP-N-ACETYLMURAMOYL-L-ALANYL-D-GLUTAMATE--2,6-DIAMINOPIMELATE LIGASE MURE HOMOLOG, CHLOROPLASTIC"/>
    <property type="match status" value="1"/>
</dbReference>
<dbReference type="Pfam" id="PF01225">
    <property type="entry name" value="Mur_ligase"/>
    <property type="match status" value="1"/>
</dbReference>
<dbReference type="Pfam" id="PF02875">
    <property type="entry name" value="Mur_ligase_C"/>
    <property type="match status" value="1"/>
</dbReference>
<dbReference type="Pfam" id="PF08245">
    <property type="entry name" value="Mur_ligase_M"/>
    <property type="match status" value="1"/>
</dbReference>
<dbReference type="SUPFAM" id="SSF53623">
    <property type="entry name" value="MurD-like peptide ligases, catalytic domain"/>
    <property type="match status" value="1"/>
</dbReference>
<dbReference type="SUPFAM" id="SSF53244">
    <property type="entry name" value="MurD-like peptide ligases, peptide-binding domain"/>
    <property type="match status" value="1"/>
</dbReference>
<dbReference type="SUPFAM" id="SSF63418">
    <property type="entry name" value="MurE/MurF N-terminal domain"/>
    <property type="match status" value="1"/>
</dbReference>
<organism>
    <name type="scientific">Rickettsia montanensis</name>
    <dbReference type="NCBI Taxonomy" id="33991"/>
    <lineage>
        <taxon>Bacteria</taxon>
        <taxon>Pseudomonadati</taxon>
        <taxon>Pseudomonadota</taxon>
        <taxon>Alphaproteobacteria</taxon>
        <taxon>Rickettsiales</taxon>
        <taxon>Rickettsiaceae</taxon>
        <taxon>Rickettsieae</taxon>
        <taxon>Rickettsia</taxon>
        <taxon>spotted fever group</taxon>
    </lineage>
</organism>
<evidence type="ECO:0000255" key="1">
    <source>
        <dbReference type="HAMAP-Rule" id="MF_00208"/>
    </source>
</evidence>
<protein>
    <recommendedName>
        <fullName evidence="1">UDP-N-acetylmuramoyl-L-alanyl-D-glutamate--2,6-diaminopimelate ligase</fullName>
        <ecNumber evidence="1">6.3.2.13</ecNumber>
    </recommendedName>
    <alternativeName>
        <fullName evidence="1">Meso-A2pm-adding enzyme</fullName>
    </alternativeName>
    <alternativeName>
        <fullName evidence="1">Meso-diaminopimelate-adding enzyme</fullName>
    </alternativeName>
    <alternativeName>
        <fullName evidence="1">UDP-MurNAc-L-Ala-D-Glu:meso-diaminopimelate ligase</fullName>
    </alternativeName>
    <alternativeName>
        <fullName evidence="1">UDP-MurNAc-tripeptide synthetase</fullName>
    </alternativeName>
    <alternativeName>
        <fullName evidence="1">UDP-N-acetylmuramyl-tripeptide synthetase</fullName>
    </alternativeName>
</protein>
<sequence length="479" mass="53568">MSHNLKQLFQQHKVKGLSINSKTVKDKDVFFAIKGRNTDGNAFIKDALSKGAVLVITDNKKNIVIDKVIYVKDVQAALHEAIEIFYPKKPKNLIAVTGTNGKSSVVSYIAQTHSLLGKKAASIGTIGVEIFGCDNLINDVPELTTLDYLSFRKIAHNLAENGIEYLVFEASSHGLDQARLREIKVNIACFTSFSQDHLDYHHTKENYLLAKLKLFINHLLPNGIAILNSDIEEIEFVKDYLHNHNIKFITVGKKGDLEITRINCSLKGQNINFTFNNREYNFNTPIIGSFQASNLLIAVLSMHYTGFAFDDVIDSLVEVKAVKGRMERIDNTNIFVDYAHTPDALEKALTELKNIKLHDSKLSVVFGCGGNRDKAKRSLMGQMAAKRADTIIITDDNPRNEDPKLIRAEIISGIEKADYTEIANREEAIKYGINNLKQDDILLVAGKGHENYQIIGDKKLPFDDAEVVRKCVKVCHPVA</sequence>
<name>MURE_RICMO</name>
<gene>
    <name evidence="1" type="primary">murE</name>
</gene>
<feature type="chain" id="PRO_0000101933" description="UDP-N-acetylmuramoyl-L-alanyl-D-glutamate--2,6-diaminopimelate ligase">
    <location>
        <begin position="1"/>
        <end position="479"/>
    </location>
</feature>
<feature type="short sequence motif" description="Meso-diaminopimelate recognition motif">
    <location>
        <begin position="396"/>
        <end position="399"/>
    </location>
</feature>
<feature type="binding site" evidence="1">
    <location>
        <position position="21"/>
    </location>
    <ligand>
        <name>UDP-N-acetyl-alpha-D-muramoyl-L-alanyl-D-glutamate</name>
        <dbReference type="ChEBI" id="CHEBI:83900"/>
    </ligand>
</feature>
<feature type="binding site" evidence="1">
    <location>
        <begin position="98"/>
        <end position="104"/>
    </location>
    <ligand>
        <name>ATP</name>
        <dbReference type="ChEBI" id="CHEBI:30616"/>
    </ligand>
</feature>
<feature type="binding site" evidence="1">
    <location>
        <begin position="144"/>
        <end position="145"/>
    </location>
    <ligand>
        <name>UDP-N-acetyl-alpha-D-muramoyl-L-alanyl-D-glutamate</name>
        <dbReference type="ChEBI" id="CHEBI:83900"/>
    </ligand>
</feature>
<feature type="binding site" evidence="1">
    <location>
        <position position="171"/>
    </location>
    <ligand>
        <name>UDP-N-acetyl-alpha-D-muramoyl-L-alanyl-D-glutamate</name>
        <dbReference type="ChEBI" id="CHEBI:83900"/>
    </ligand>
</feature>
<feature type="binding site" evidence="1">
    <location>
        <position position="177"/>
    </location>
    <ligand>
        <name>UDP-N-acetyl-alpha-D-muramoyl-L-alanyl-D-glutamate</name>
        <dbReference type="ChEBI" id="CHEBI:83900"/>
    </ligand>
</feature>
<feature type="binding site" evidence="1">
    <location>
        <position position="179"/>
    </location>
    <ligand>
        <name>UDP-N-acetyl-alpha-D-muramoyl-L-alanyl-D-glutamate</name>
        <dbReference type="ChEBI" id="CHEBI:83900"/>
    </ligand>
</feature>
<feature type="binding site" evidence="1">
    <location>
        <position position="372"/>
    </location>
    <ligand>
        <name>meso-2,6-diaminopimelate</name>
        <dbReference type="ChEBI" id="CHEBI:57791"/>
    </ligand>
</feature>
<feature type="binding site" evidence="1">
    <location>
        <begin position="396"/>
        <end position="399"/>
    </location>
    <ligand>
        <name>meso-2,6-diaminopimelate</name>
        <dbReference type="ChEBI" id="CHEBI:57791"/>
    </ligand>
</feature>
<feature type="binding site" evidence="1">
    <location>
        <position position="446"/>
    </location>
    <ligand>
        <name>meso-2,6-diaminopimelate</name>
        <dbReference type="ChEBI" id="CHEBI:57791"/>
    </ligand>
</feature>
<feature type="binding site" evidence="1">
    <location>
        <position position="450"/>
    </location>
    <ligand>
        <name>meso-2,6-diaminopimelate</name>
        <dbReference type="ChEBI" id="CHEBI:57791"/>
    </ligand>
</feature>
<feature type="modified residue" description="N6-carboxylysine" evidence="1">
    <location>
        <position position="211"/>
    </location>
</feature>
<comment type="function">
    <text evidence="1">Catalyzes the addition of meso-diaminopimelic acid to the nucleotide precursor UDP-N-acetylmuramoyl-L-alanyl-D-glutamate (UMAG) in the biosynthesis of bacterial cell-wall peptidoglycan.</text>
</comment>
<comment type="catalytic activity">
    <reaction evidence="1">
        <text>UDP-N-acetyl-alpha-D-muramoyl-L-alanyl-D-glutamate + meso-2,6-diaminopimelate + ATP = UDP-N-acetyl-alpha-D-muramoyl-L-alanyl-gamma-D-glutamyl-meso-2,6-diaminopimelate + ADP + phosphate + H(+)</text>
        <dbReference type="Rhea" id="RHEA:23676"/>
        <dbReference type="ChEBI" id="CHEBI:15378"/>
        <dbReference type="ChEBI" id="CHEBI:30616"/>
        <dbReference type="ChEBI" id="CHEBI:43474"/>
        <dbReference type="ChEBI" id="CHEBI:57791"/>
        <dbReference type="ChEBI" id="CHEBI:83900"/>
        <dbReference type="ChEBI" id="CHEBI:83905"/>
        <dbReference type="ChEBI" id="CHEBI:456216"/>
        <dbReference type="EC" id="6.3.2.13"/>
    </reaction>
</comment>
<comment type="cofactor">
    <cofactor evidence="1">
        <name>Mg(2+)</name>
        <dbReference type="ChEBI" id="CHEBI:18420"/>
    </cofactor>
</comment>
<comment type="pathway">
    <text evidence="1">Cell wall biogenesis; peptidoglycan biosynthesis.</text>
</comment>
<comment type="subcellular location">
    <subcellularLocation>
        <location evidence="1">Cytoplasm</location>
    </subcellularLocation>
</comment>
<comment type="PTM">
    <text evidence="1">Carboxylation is probably crucial for Mg(2+) binding and, consequently, for the gamma-phosphate positioning of ATP.</text>
</comment>
<comment type="similarity">
    <text evidence="1">Belongs to the MurCDEF family. MurE subfamily.</text>
</comment>
<keyword id="KW-0067">ATP-binding</keyword>
<keyword id="KW-0131">Cell cycle</keyword>
<keyword id="KW-0132">Cell division</keyword>
<keyword id="KW-0133">Cell shape</keyword>
<keyword id="KW-0961">Cell wall biogenesis/degradation</keyword>
<keyword id="KW-0963">Cytoplasm</keyword>
<keyword id="KW-0436">Ligase</keyword>
<keyword id="KW-0460">Magnesium</keyword>
<keyword id="KW-0547">Nucleotide-binding</keyword>
<keyword id="KW-0573">Peptidoglycan synthesis</keyword>
<proteinExistence type="inferred from homology"/>